<dbReference type="EMBL" id="AL646052">
    <property type="protein sequence ID" value="CAD16270.1"/>
    <property type="molecule type" value="Genomic_DNA"/>
</dbReference>
<dbReference type="RefSeq" id="WP_011002478.1">
    <property type="nucleotide sequence ID" value="NC_003295.1"/>
</dbReference>
<dbReference type="SMR" id="Q8XWB1"/>
<dbReference type="STRING" id="267608.RSc2563"/>
<dbReference type="EnsemblBacteria" id="CAD16270">
    <property type="protein sequence ID" value="CAD16270"/>
    <property type="gene ID" value="RSc2563"/>
</dbReference>
<dbReference type="KEGG" id="rso:RSc2563"/>
<dbReference type="eggNOG" id="COG0323">
    <property type="taxonomic scope" value="Bacteria"/>
</dbReference>
<dbReference type="HOGENOM" id="CLU_004131_4_2_4"/>
<dbReference type="Proteomes" id="UP000001436">
    <property type="component" value="Chromosome"/>
</dbReference>
<dbReference type="GO" id="GO:0032300">
    <property type="term" value="C:mismatch repair complex"/>
    <property type="evidence" value="ECO:0007669"/>
    <property type="project" value="InterPro"/>
</dbReference>
<dbReference type="GO" id="GO:0005524">
    <property type="term" value="F:ATP binding"/>
    <property type="evidence" value="ECO:0007669"/>
    <property type="project" value="InterPro"/>
</dbReference>
<dbReference type="GO" id="GO:0016887">
    <property type="term" value="F:ATP hydrolysis activity"/>
    <property type="evidence" value="ECO:0007669"/>
    <property type="project" value="InterPro"/>
</dbReference>
<dbReference type="GO" id="GO:0140664">
    <property type="term" value="F:ATP-dependent DNA damage sensor activity"/>
    <property type="evidence" value="ECO:0007669"/>
    <property type="project" value="InterPro"/>
</dbReference>
<dbReference type="GO" id="GO:0030983">
    <property type="term" value="F:mismatched DNA binding"/>
    <property type="evidence" value="ECO:0007669"/>
    <property type="project" value="InterPro"/>
</dbReference>
<dbReference type="GO" id="GO:0006298">
    <property type="term" value="P:mismatch repair"/>
    <property type="evidence" value="ECO:0007669"/>
    <property type="project" value="UniProtKB-UniRule"/>
</dbReference>
<dbReference type="CDD" id="cd16926">
    <property type="entry name" value="HATPase_MutL-MLH-PMS-like"/>
    <property type="match status" value="1"/>
</dbReference>
<dbReference type="CDD" id="cd03482">
    <property type="entry name" value="MutL_Trans_MutL"/>
    <property type="match status" value="1"/>
</dbReference>
<dbReference type="FunFam" id="3.30.565.10:FF:000003">
    <property type="entry name" value="DNA mismatch repair endonuclease MutL"/>
    <property type="match status" value="1"/>
</dbReference>
<dbReference type="Gene3D" id="3.30.230.10">
    <property type="match status" value="1"/>
</dbReference>
<dbReference type="Gene3D" id="3.30.565.10">
    <property type="entry name" value="Histidine kinase-like ATPase, C-terminal domain"/>
    <property type="match status" value="1"/>
</dbReference>
<dbReference type="Gene3D" id="3.30.1540.20">
    <property type="entry name" value="MutL, C-terminal domain, dimerisation subdomain"/>
    <property type="match status" value="1"/>
</dbReference>
<dbReference type="Gene3D" id="3.30.1370.100">
    <property type="entry name" value="MutL, C-terminal domain, regulatory subdomain"/>
    <property type="match status" value="1"/>
</dbReference>
<dbReference type="HAMAP" id="MF_00149">
    <property type="entry name" value="DNA_mis_repair"/>
    <property type="match status" value="1"/>
</dbReference>
<dbReference type="InterPro" id="IPR014762">
    <property type="entry name" value="DNA_mismatch_repair_CS"/>
</dbReference>
<dbReference type="InterPro" id="IPR020667">
    <property type="entry name" value="DNA_mismatch_repair_MutL"/>
</dbReference>
<dbReference type="InterPro" id="IPR013507">
    <property type="entry name" value="DNA_mismatch_S5_2-like"/>
</dbReference>
<dbReference type="InterPro" id="IPR036890">
    <property type="entry name" value="HATPase_C_sf"/>
</dbReference>
<dbReference type="InterPro" id="IPR002099">
    <property type="entry name" value="MutL/Mlh/PMS"/>
</dbReference>
<dbReference type="InterPro" id="IPR038973">
    <property type="entry name" value="MutL/Mlh/Pms-like"/>
</dbReference>
<dbReference type="InterPro" id="IPR014790">
    <property type="entry name" value="MutL_C"/>
</dbReference>
<dbReference type="InterPro" id="IPR042120">
    <property type="entry name" value="MutL_C_dimsub"/>
</dbReference>
<dbReference type="InterPro" id="IPR042121">
    <property type="entry name" value="MutL_C_regsub"/>
</dbReference>
<dbReference type="InterPro" id="IPR037198">
    <property type="entry name" value="MutL_C_sf"/>
</dbReference>
<dbReference type="InterPro" id="IPR020568">
    <property type="entry name" value="Ribosomal_Su5_D2-typ_SF"/>
</dbReference>
<dbReference type="InterPro" id="IPR014721">
    <property type="entry name" value="Ribsml_uS5_D2-typ_fold_subgr"/>
</dbReference>
<dbReference type="NCBIfam" id="TIGR00585">
    <property type="entry name" value="mutl"/>
    <property type="match status" value="1"/>
</dbReference>
<dbReference type="NCBIfam" id="NF000949">
    <property type="entry name" value="PRK00095.1-2"/>
    <property type="match status" value="1"/>
</dbReference>
<dbReference type="PANTHER" id="PTHR10073">
    <property type="entry name" value="DNA MISMATCH REPAIR PROTEIN MLH, PMS, MUTL"/>
    <property type="match status" value="1"/>
</dbReference>
<dbReference type="PANTHER" id="PTHR10073:SF12">
    <property type="entry name" value="DNA MISMATCH REPAIR PROTEIN MLH1"/>
    <property type="match status" value="1"/>
</dbReference>
<dbReference type="Pfam" id="PF01119">
    <property type="entry name" value="DNA_mis_repair"/>
    <property type="match status" value="1"/>
</dbReference>
<dbReference type="Pfam" id="PF13589">
    <property type="entry name" value="HATPase_c_3"/>
    <property type="match status" value="1"/>
</dbReference>
<dbReference type="Pfam" id="PF08676">
    <property type="entry name" value="MutL_C"/>
    <property type="match status" value="1"/>
</dbReference>
<dbReference type="SMART" id="SM01340">
    <property type="entry name" value="DNA_mis_repair"/>
    <property type="match status" value="1"/>
</dbReference>
<dbReference type="SMART" id="SM00853">
    <property type="entry name" value="MutL_C"/>
    <property type="match status" value="1"/>
</dbReference>
<dbReference type="SUPFAM" id="SSF55874">
    <property type="entry name" value="ATPase domain of HSP90 chaperone/DNA topoisomerase II/histidine kinase"/>
    <property type="match status" value="1"/>
</dbReference>
<dbReference type="SUPFAM" id="SSF118116">
    <property type="entry name" value="DNA mismatch repair protein MutL"/>
    <property type="match status" value="1"/>
</dbReference>
<dbReference type="SUPFAM" id="SSF54211">
    <property type="entry name" value="Ribosomal protein S5 domain 2-like"/>
    <property type="match status" value="1"/>
</dbReference>
<dbReference type="PROSITE" id="PS00058">
    <property type="entry name" value="DNA_MISMATCH_REPAIR_1"/>
    <property type="match status" value="1"/>
</dbReference>
<accession>Q8XWB1</accession>
<sequence length="636" mass="68732">MTAATPARRPIRPLPDQLISQIAAGEVVERPASVVKELLENALDAGATQLQIKLEEGGVRRIAITDNGGGIPVDELPVALMRHATSKIGSLEELESVATLGFRGEALASIASVAELTLTSRTAQDAHATQIIAQTGRVQPASGGVGTTVDVQHLYFNTPARRKFLKTEQTELGHCLEVIRRTALARPDVAISVHHNGKPLEHWNAAQADMRTAAVLGTEFARARLPFEEAAGELRLFGFAGLPTASRGRADHQFFYVNGRFVRDRLLTHAVRSAYEDVLHGDRFPAYVLCLELPPEAVDVNVHPSKIEVRFRDSRAVHQFVYHAVQRALSRHAGEQGDSLRTDIADAPEQPGATATPADNTTRWVNQMAARQTSLGIAQPRAEYLAMMRGGSAPQPSSRPAWMADVPSAATLFDGAASAPADAAPAQASEPAAAPQADDSDDAHPLGFAVAQLHGIYVLAQNARGMVLVDMHAAHERILYEQLKTALEARRIEVQPLLIPVTFAASPVEIGTAEEFGDTLDLLGFDISAVSPTTLAVRAVPTLLQKADAQALARDVLRDLQAYGGSRVLAERQNELLATLACHSAVRANRRLNLDEMNALLRQMEATERADQCNHGRPTWIQLTVADLDRLFLRGQ</sequence>
<organism>
    <name type="scientific">Ralstonia nicotianae (strain ATCC BAA-1114 / GMI1000)</name>
    <name type="common">Ralstonia solanacearum</name>
    <dbReference type="NCBI Taxonomy" id="267608"/>
    <lineage>
        <taxon>Bacteria</taxon>
        <taxon>Pseudomonadati</taxon>
        <taxon>Pseudomonadota</taxon>
        <taxon>Betaproteobacteria</taxon>
        <taxon>Burkholderiales</taxon>
        <taxon>Burkholderiaceae</taxon>
        <taxon>Ralstonia</taxon>
        <taxon>Ralstonia solanacearum species complex</taxon>
    </lineage>
</organism>
<reference key="1">
    <citation type="journal article" date="2002" name="Nature">
        <title>Genome sequence of the plant pathogen Ralstonia solanacearum.</title>
        <authorList>
            <person name="Salanoubat M."/>
            <person name="Genin S."/>
            <person name="Artiguenave F."/>
            <person name="Gouzy J."/>
            <person name="Mangenot S."/>
            <person name="Arlat M."/>
            <person name="Billault A."/>
            <person name="Brottier P."/>
            <person name="Camus J.-C."/>
            <person name="Cattolico L."/>
            <person name="Chandler M."/>
            <person name="Choisne N."/>
            <person name="Claudel-Renard C."/>
            <person name="Cunnac S."/>
            <person name="Demange N."/>
            <person name="Gaspin C."/>
            <person name="Lavie M."/>
            <person name="Moisan A."/>
            <person name="Robert C."/>
            <person name="Saurin W."/>
            <person name="Schiex T."/>
            <person name="Siguier P."/>
            <person name="Thebault P."/>
            <person name="Whalen M."/>
            <person name="Wincker P."/>
            <person name="Levy M."/>
            <person name="Weissenbach J."/>
            <person name="Boucher C.A."/>
        </authorList>
    </citation>
    <scope>NUCLEOTIDE SEQUENCE [LARGE SCALE GENOMIC DNA]</scope>
    <source>
        <strain>ATCC BAA-1114 / GMI1000</strain>
    </source>
</reference>
<keyword id="KW-0227">DNA damage</keyword>
<keyword id="KW-0234">DNA repair</keyword>
<keyword id="KW-1185">Reference proteome</keyword>
<proteinExistence type="inferred from homology"/>
<name>MUTL_RALN1</name>
<comment type="function">
    <text evidence="1">This protein is involved in the repair of mismatches in DNA. It is required for dam-dependent methyl-directed DNA mismatch repair. May act as a 'molecular matchmaker', a protein that promotes the formation of a stable complex between two or more DNA-binding proteins in an ATP-dependent manner without itself being part of a final effector complex.</text>
</comment>
<comment type="similarity">
    <text evidence="1">Belongs to the DNA mismatch repair MutL/HexB family.</text>
</comment>
<evidence type="ECO:0000255" key="1">
    <source>
        <dbReference type="HAMAP-Rule" id="MF_00149"/>
    </source>
</evidence>
<evidence type="ECO:0000256" key="2">
    <source>
        <dbReference type="SAM" id="MobiDB-lite"/>
    </source>
</evidence>
<gene>
    <name evidence="1" type="primary">mutL</name>
    <name type="ordered locus">RSc2563</name>
    <name type="ORF">RS00753</name>
</gene>
<feature type="chain" id="PRO_0000177961" description="DNA mismatch repair protein MutL">
    <location>
        <begin position="1"/>
        <end position="636"/>
    </location>
</feature>
<feature type="region of interest" description="Disordered" evidence="2">
    <location>
        <begin position="332"/>
        <end position="360"/>
    </location>
</feature>
<feature type="region of interest" description="Disordered" evidence="2">
    <location>
        <begin position="417"/>
        <end position="443"/>
    </location>
</feature>
<feature type="compositionally biased region" description="Basic and acidic residues" evidence="2">
    <location>
        <begin position="332"/>
        <end position="344"/>
    </location>
</feature>
<feature type="compositionally biased region" description="Low complexity" evidence="2">
    <location>
        <begin position="417"/>
        <end position="437"/>
    </location>
</feature>
<protein>
    <recommendedName>
        <fullName evidence="1">DNA mismatch repair protein MutL</fullName>
    </recommendedName>
</protein>